<accession>A7ZIN5</accession>
<dbReference type="EC" id="4.98.1.1" evidence="1"/>
<dbReference type="EMBL" id="CP000800">
    <property type="protein sequence ID" value="ABV20426.1"/>
    <property type="molecule type" value="Genomic_DNA"/>
</dbReference>
<dbReference type="RefSeq" id="WP_001250093.1">
    <property type="nucleotide sequence ID" value="NC_009801.1"/>
</dbReference>
<dbReference type="SMR" id="A7ZIN5"/>
<dbReference type="KEGG" id="ecw:EcE24377A_0515"/>
<dbReference type="HOGENOM" id="CLU_018884_0_0_6"/>
<dbReference type="UniPathway" id="UPA00252">
    <property type="reaction ID" value="UER00325"/>
</dbReference>
<dbReference type="Proteomes" id="UP000001122">
    <property type="component" value="Chromosome"/>
</dbReference>
<dbReference type="GO" id="GO:0005737">
    <property type="term" value="C:cytoplasm"/>
    <property type="evidence" value="ECO:0007669"/>
    <property type="project" value="UniProtKB-SubCell"/>
</dbReference>
<dbReference type="GO" id="GO:0004325">
    <property type="term" value="F:ferrochelatase activity"/>
    <property type="evidence" value="ECO:0007669"/>
    <property type="project" value="UniProtKB-UniRule"/>
</dbReference>
<dbReference type="GO" id="GO:0046872">
    <property type="term" value="F:metal ion binding"/>
    <property type="evidence" value="ECO:0007669"/>
    <property type="project" value="UniProtKB-KW"/>
</dbReference>
<dbReference type="GO" id="GO:0006783">
    <property type="term" value="P:heme biosynthetic process"/>
    <property type="evidence" value="ECO:0007669"/>
    <property type="project" value="UniProtKB-UniRule"/>
</dbReference>
<dbReference type="CDD" id="cd00419">
    <property type="entry name" value="Ferrochelatase_C"/>
    <property type="match status" value="1"/>
</dbReference>
<dbReference type="CDD" id="cd03411">
    <property type="entry name" value="Ferrochelatase_N"/>
    <property type="match status" value="1"/>
</dbReference>
<dbReference type="FunFam" id="3.40.50.1400:FF:000004">
    <property type="entry name" value="Ferrochelatase"/>
    <property type="match status" value="1"/>
</dbReference>
<dbReference type="Gene3D" id="3.40.50.1400">
    <property type="match status" value="2"/>
</dbReference>
<dbReference type="HAMAP" id="MF_00323">
    <property type="entry name" value="Ferrochelatase"/>
    <property type="match status" value="1"/>
</dbReference>
<dbReference type="InterPro" id="IPR001015">
    <property type="entry name" value="Ferrochelatase"/>
</dbReference>
<dbReference type="InterPro" id="IPR019772">
    <property type="entry name" value="Ferrochelatase_AS"/>
</dbReference>
<dbReference type="InterPro" id="IPR033644">
    <property type="entry name" value="Ferrochelatase_C"/>
</dbReference>
<dbReference type="InterPro" id="IPR033659">
    <property type="entry name" value="Ferrochelatase_N"/>
</dbReference>
<dbReference type="NCBIfam" id="TIGR00109">
    <property type="entry name" value="hemH"/>
    <property type="match status" value="1"/>
</dbReference>
<dbReference type="PANTHER" id="PTHR11108">
    <property type="entry name" value="FERROCHELATASE"/>
    <property type="match status" value="1"/>
</dbReference>
<dbReference type="PANTHER" id="PTHR11108:SF1">
    <property type="entry name" value="FERROCHELATASE, MITOCHONDRIAL"/>
    <property type="match status" value="1"/>
</dbReference>
<dbReference type="Pfam" id="PF00762">
    <property type="entry name" value="Ferrochelatase"/>
    <property type="match status" value="1"/>
</dbReference>
<dbReference type="SUPFAM" id="SSF53800">
    <property type="entry name" value="Chelatase"/>
    <property type="match status" value="1"/>
</dbReference>
<dbReference type="PROSITE" id="PS00534">
    <property type="entry name" value="FERROCHELATASE"/>
    <property type="match status" value="1"/>
</dbReference>
<comment type="function">
    <text evidence="1">Catalyzes the ferrous insertion into protoporphyrin IX.</text>
</comment>
<comment type="catalytic activity">
    <reaction evidence="1">
        <text>heme b + 2 H(+) = protoporphyrin IX + Fe(2+)</text>
        <dbReference type="Rhea" id="RHEA:22584"/>
        <dbReference type="ChEBI" id="CHEBI:15378"/>
        <dbReference type="ChEBI" id="CHEBI:29033"/>
        <dbReference type="ChEBI" id="CHEBI:57306"/>
        <dbReference type="ChEBI" id="CHEBI:60344"/>
        <dbReference type="EC" id="4.98.1.1"/>
    </reaction>
</comment>
<comment type="pathway">
    <text evidence="1">Porphyrin-containing compound metabolism; protoheme biosynthesis; protoheme from protoporphyrin-IX: step 1/1.</text>
</comment>
<comment type="subunit">
    <text evidence="1">Monomer.</text>
</comment>
<comment type="subcellular location">
    <subcellularLocation>
        <location evidence="1">Cytoplasm</location>
    </subcellularLocation>
</comment>
<comment type="similarity">
    <text evidence="1">Belongs to the ferrochelatase family.</text>
</comment>
<feature type="chain" id="PRO_1000059478" description="Ferrochelatase">
    <location>
        <begin position="1"/>
        <end position="320"/>
    </location>
</feature>
<feature type="binding site" evidence="1">
    <location>
        <position position="194"/>
    </location>
    <ligand>
        <name>Fe cation</name>
        <dbReference type="ChEBI" id="CHEBI:24875"/>
    </ligand>
</feature>
<feature type="binding site" evidence="1">
    <location>
        <position position="275"/>
    </location>
    <ligand>
        <name>Fe cation</name>
        <dbReference type="ChEBI" id="CHEBI:24875"/>
    </ligand>
</feature>
<organism>
    <name type="scientific">Escherichia coli O139:H28 (strain E24377A / ETEC)</name>
    <dbReference type="NCBI Taxonomy" id="331111"/>
    <lineage>
        <taxon>Bacteria</taxon>
        <taxon>Pseudomonadati</taxon>
        <taxon>Pseudomonadota</taxon>
        <taxon>Gammaproteobacteria</taxon>
        <taxon>Enterobacterales</taxon>
        <taxon>Enterobacteriaceae</taxon>
        <taxon>Escherichia</taxon>
    </lineage>
</organism>
<name>HEMH_ECO24</name>
<reference key="1">
    <citation type="journal article" date="2008" name="J. Bacteriol.">
        <title>The pangenome structure of Escherichia coli: comparative genomic analysis of E. coli commensal and pathogenic isolates.</title>
        <authorList>
            <person name="Rasko D.A."/>
            <person name="Rosovitz M.J."/>
            <person name="Myers G.S.A."/>
            <person name="Mongodin E.F."/>
            <person name="Fricke W.F."/>
            <person name="Gajer P."/>
            <person name="Crabtree J."/>
            <person name="Sebaihia M."/>
            <person name="Thomson N.R."/>
            <person name="Chaudhuri R."/>
            <person name="Henderson I.R."/>
            <person name="Sperandio V."/>
            <person name="Ravel J."/>
        </authorList>
    </citation>
    <scope>NUCLEOTIDE SEQUENCE [LARGE SCALE GENOMIC DNA]</scope>
    <source>
        <strain>E24377A / ETEC</strain>
    </source>
</reference>
<evidence type="ECO:0000255" key="1">
    <source>
        <dbReference type="HAMAP-Rule" id="MF_00323"/>
    </source>
</evidence>
<proteinExistence type="inferred from homology"/>
<keyword id="KW-0963">Cytoplasm</keyword>
<keyword id="KW-0350">Heme biosynthesis</keyword>
<keyword id="KW-0408">Iron</keyword>
<keyword id="KW-0456">Lyase</keyword>
<keyword id="KW-0479">Metal-binding</keyword>
<keyword id="KW-0627">Porphyrin biosynthesis</keyword>
<keyword id="KW-1185">Reference proteome</keyword>
<gene>
    <name evidence="1" type="primary">hemH</name>
    <name type="ordered locus">EcE24377A_0515</name>
</gene>
<sequence>MRQTKTGILLANLGTPDAPTPEAVKRYLKQFLSDRRVVDTSRLLWWPLLRGVILPLRSPRVAKLYASVWMEDGSPLMVYSRQQQQALAQRLPDTPVALGMSYGSPSLESAVDELLAEHVDHIVVLPLYPQFSCSTVGAVWDELARILARKRSIPGISFIRDYADNHDYINALANSVRASFAKHGESDLLLLSYHGIPQRYADEGDDYPQRCRTTTRELASALGMAPEKVMMTFQSRFGREPWLMPYTDETLKMLGEKGVGHIQVMCPGFAADCLETLEEIAEQNREVFLGAGGKKYEYIPALNATPEHIEMMANLVAAYR</sequence>
<protein>
    <recommendedName>
        <fullName evidence="1">Ferrochelatase</fullName>
        <ecNumber evidence="1">4.98.1.1</ecNumber>
    </recommendedName>
    <alternativeName>
        <fullName evidence="1">Heme synthase</fullName>
    </alternativeName>
    <alternativeName>
        <fullName evidence="1">Protoheme ferro-lyase</fullName>
    </alternativeName>
</protein>